<protein>
    <recommendedName>
        <fullName evidence="1">Small ribosomal subunit protein uS17</fullName>
    </recommendedName>
    <alternativeName>
        <fullName evidence="2">30S ribosomal protein S17</fullName>
    </alternativeName>
</protein>
<sequence length="87" mass="10203">MSERNDRKVYVGRVVSDKMDKTITVLVETYKTHKLYGKRVKYSKKYKTHDENNSAKLGDIVKIQETRPLSATKRFRLVEIVEESVII</sequence>
<reference key="1">
    <citation type="journal article" date="2009" name="Appl. Environ. Microbiol.">
        <title>Genome analysis of the meat starter culture bacterium Staphylococcus carnosus TM300.</title>
        <authorList>
            <person name="Rosenstein R."/>
            <person name="Nerz C."/>
            <person name="Biswas L."/>
            <person name="Resch A."/>
            <person name="Raddatz G."/>
            <person name="Schuster S.C."/>
            <person name="Goetz F."/>
        </authorList>
    </citation>
    <scope>NUCLEOTIDE SEQUENCE [LARGE SCALE GENOMIC DNA]</scope>
    <source>
        <strain>TM300</strain>
    </source>
</reference>
<comment type="function">
    <text evidence="1">One of the primary rRNA binding proteins, it binds specifically to the 5'-end of 16S ribosomal RNA.</text>
</comment>
<comment type="subunit">
    <text evidence="1">Part of the 30S ribosomal subunit.</text>
</comment>
<comment type="similarity">
    <text evidence="1">Belongs to the universal ribosomal protein uS17 family.</text>
</comment>
<gene>
    <name evidence="1" type="primary">rpsQ</name>
    <name type="ordered locus">Sca_1726</name>
</gene>
<accession>B9DM38</accession>
<feature type="chain" id="PRO_1000166496" description="Small ribosomal subunit protein uS17">
    <location>
        <begin position="1"/>
        <end position="87"/>
    </location>
</feature>
<proteinExistence type="inferred from homology"/>
<dbReference type="EMBL" id="AM295250">
    <property type="protein sequence ID" value="CAL28632.1"/>
    <property type="molecule type" value="Genomic_DNA"/>
</dbReference>
<dbReference type="RefSeq" id="WP_002432741.1">
    <property type="nucleotide sequence ID" value="NC_012121.1"/>
</dbReference>
<dbReference type="SMR" id="B9DM38"/>
<dbReference type="GeneID" id="93794185"/>
<dbReference type="KEGG" id="sca:SCA_1726"/>
<dbReference type="eggNOG" id="COG0186">
    <property type="taxonomic scope" value="Bacteria"/>
</dbReference>
<dbReference type="HOGENOM" id="CLU_073626_1_0_9"/>
<dbReference type="OrthoDB" id="9811714at2"/>
<dbReference type="BioCyc" id="SCAR396513:SCA_RS08795-MONOMER"/>
<dbReference type="Proteomes" id="UP000000444">
    <property type="component" value="Chromosome"/>
</dbReference>
<dbReference type="GO" id="GO:0022627">
    <property type="term" value="C:cytosolic small ribosomal subunit"/>
    <property type="evidence" value="ECO:0007669"/>
    <property type="project" value="TreeGrafter"/>
</dbReference>
<dbReference type="GO" id="GO:0019843">
    <property type="term" value="F:rRNA binding"/>
    <property type="evidence" value="ECO:0007669"/>
    <property type="project" value="UniProtKB-UniRule"/>
</dbReference>
<dbReference type="GO" id="GO:0003735">
    <property type="term" value="F:structural constituent of ribosome"/>
    <property type="evidence" value="ECO:0007669"/>
    <property type="project" value="InterPro"/>
</dbReference>
<dbReference type="GO" id="GO:0006412">
    <property type="term" value="P:translation"/>
    <property type="evidence" value="ECO:0007669"/>
    <property type="project" value="UniProtKB-UniRule"/>
</dbReference>
<dbReference type="CDD" id="cd00364">
    <property type="entry name" value="Ribosomal_uS17"/>
    <property type="match status" value="1"/>
</dbReference>
<dbReference type="FunFam" id="2.40.50.140:FF:000026">
    <property type="entry name" value="30S ribosomal protein S17"/>
    <property type="match status" value="1"/>
</dbReference>
<dbReference type="Gene3D" id="2.40.50.140">
    <property type="entry name" value="Nucleic acid-binding proteins"/>
    <property type="match status" value="1"/>
</dbReference>
<dbReference type="HAMAP" id="MF_01345_B">
    <property type="entry name" value="Ribosomal_uS17_B"/>
    <property type="match status" value="1"/>
</dbReference>
<dbReference type="InterPro" id="IPR012340">
    <property type="entry name" value="NA-bd_OB-fold"/>
</dbReference>
<dbReference type="InterPro" id="IPR000266">
    <property type="entry name" value="Ribosomal_uS17"/>
</dbReference>
<dbReference type="InterPro" id="IPR019984">
    <property type="entry name" value="Ribosomal_uS17_bact/chlr"/>
</dbReference>
<dbReference type="InterPro" id="IPR019979">
    <property type="entry name" value="Ribosomal_uS17_CS"/>
</dbReference>
<dbReference type="NCBIfam" id="NF004123">
    <property type="entry name" value="PRK05610.1"/>
    <property type="match status" value="1"/>
</dbReference>
<dbReference type="NCBIfam" id="TIGR03635">
    <property type="entry name" value="uS17_bact"/>
    <property type="match status" value="1"/>
</dbReference>
<dbReference type="PANTHER" id="PTHR10744">
    <property type="entry name" value="40S RIBOSOMAL PROTEIN S11 FAMILY MEMBER"/>
    <property type="match status" value="1"/>
</dbReference>
<dbReference type="PANTHER" id="PTHR10744:SF1">
    <property type="entry name" value="SMALL RIBOSOMAL SUBUNIT PROTEIN US17M"/>
    <property type="match status" value="1"/>
</dbReference>
<dbReference type="Pfam" id="PF00366">
    <property type="entry name" value="Ribosomal_S17"/>
    <property type="match status" value="1"/>
</dbReference>
<dbReference type="PRINTS" id="PR00973">
    <property type="entry name" value="RIBOSOMALS17"/>
</dbReference>
<dbReference type="SUPFAM" id="SSF50249">
    <property type="entry name" value="Nucleic acid-binding proteins"/>
    <property type="match status" value="1"/>
</dbReference>
<dbReference type="PROSITE" id="PS00056">
    <property type="entry name" value="RIBOSOMAL_S17"/>
    <property type="match status" value="1"/>
</dbReference>
<organism>
    <name type="scientific">Staphylococcus carnosus (strain TM300)</name>
    <dbReference type="NCBI Taxonomy" id="396513"/>
    <lineage>
        <taxon>Bacteria</taxon>
        <taxon>Bacillati</taxon>
        <taxon>Bacillota</taxon>
        <taxon>Bacilli</taxon>
        <taxon>Bacillales</taxon>
        <taxon>Staphylococcaceae</taxon>
        <taxon>Staphylococcus</taxon>
    </lineage>
</organism>
<keyword id="KW-1185">Reference proteome</keyword>
<keyword id="KW-0687">Ribonucleoprotein</keyword>
<keyword id="KW-0689">Ribosomal protein</keyword>
<keyword id="KW-0694">RNA-binding</keyword>
<keyword id="KW-0699">rRNA-binding</keyword>
<name>RS17_STACT</name>
<evidence type="ECO:0000255" key="1">
    <source>
        <dbReference type="HAMAP-Rule" id="MF_01345"/>
    </source>
</evidence>
<evidence type="ECO:0000305" key="2"/>